<comment type="function">
    <text>Serine protease inhibitor. This peptide can inhibit, in-vivo, acrosin and, to a lower level, plasma kallikrein. It probably plays a role in Drosophila reproduction.</text>
</comment>
<accession>P11424</accession>
<keyword id="KW-0903">Direct protein sequencing</keyword>
<keyword id="KW-1015">Disulfide bond</keyword>
<keyword id="KW-0646">Protease inhibitor</keyword>
<keyword id="KW-0722">Serine protease inhibitor</keyword>
<organism>
    <name type="scientific">Drosophila funebris</name>
    <name type="common">Fruit fly</name>
    <dbReference type="NCBI Taxonomy" id="7221"/>
    <lineage>
        <taxon>Eukaryota</taxon>
        <taxon>Metazoa</taxon>
        <taxon>Ecdysozoa</taxon>
        <taxon>Arthropoda</taxon>
        <taxon>Hexapoda</taxon>
        <taxon>Insecta</taxon>
        <taxon>Pterygota</taxon>
        <taxon>Neoptera</taxon>
        <taxon>Endopterygota</taxon>
        <taxon>Diptera</taxon>
        <taxon>Brachycera</taxon>
        <taxon>Muscomorpha</taxon>
        <taxon>Ephydroidea</taxon>
        <taxon>Drosophilidae</taxon>
        <taxon>Drosophila</taxon>
    </lineage>
</organism>
<feature type="chain" id="PRO_0000155449" description="Male accessory gland serine protease inhibitor">
    <location>
        <begin position="1"/>
        <end position="63"/>
    </location>
</feature>
<feature type="domain" description="BPTI/Kunitz inhibitor" evidence="2">
    <location>
        <begin position="6"/>
        <end position="62"/>
    </location>
</feature>
<feature type="site" description="Reactive bond for trypsin" evidence="1">
    <location>
        <begin position="22"/>
        <end position="23"/>
    </location>
</feature>
<feature type="disulfide bond" evidence="2">
    <location>
        <begin position="6"/>
        <end position="62"/>
    </location>
</feature>
<feature type="disulfide bond" evidence="2">
    <location>
        <begin position="21"/>
        <end position="45"/>
    </location>
</feature>
<feature type="disulfide bond" evidence="2">
    <location>
        <begin position="37"/>
        <end position="58"/>
    </location>
</feature>
<sequence>FKNPECGEPHSLDGSPNGISCRGYFPSWSYNPDAQQCVSFVYGGCGGNNNRFGSQNECEERCI</sequence>
<proteinExistence type="evidence at protein level"/>
<reference key="1">
    <citation type="journal article" date="1989" name="J. Biol. Chem.">
        <title>A male accessory gland peptide with protease inhibitory activity in Drosophila funebris.</title>
        <authorList>
            <person name="Schmidt T."/>
            <person name="Stumm-Zollinger E."/>
            <person name="Chen P.-S."/>
            <person name="Boehlen P."/>
            <person name="Stone S.R."/>
        </authorList>
    </citation>
    <scope>PROTEIN SEQUENCE</scope>
</reference>
<gene>
    <name type="primary">PapD</name>
</gene>
<name>IMAP_DROFU</name>
<evidence type="ECO:0000250" key="1"/>
<evidence type="ECO:0000255" key="2">
    <source>
        <dbReference type="PROSITE-ProRule" id="PRU00031"/>
    </source>
</evidence>
<dbReference type="PIR" id="A33502">
    <property type="entry name" value="TIFFAF"/>
</dbReference>
<dbReference type="SMR" id="P11424"/>
<dbReference type="MEROPS" id="I02.019"/>
<dbReference type="GO" id="GO:0004867">
    <property type="term" value="F:serine-type endopeptidase inhibitor activity"/>
    <property type="evidence" value="ECO:0007669"/>
    <property type="project" value="UniProtKB-KW"/>
</dbReference>
<dbReference type="CDD" id="cd22634">
    <property type="entry name" value="Kunitz_SCI-I-like"/>
    <property type="match status" value="1"/>
</dbReference>
<dbReference type="FunFam" id="4.10.410.10:FF:000020">
    <property type="entry name" value="Collagen, type VI, alpha 3"/>
    <property type="match status" value="1"/>
</dbReference>
<dbReference type="Gene3D" id="4.10.410.10">
    <property type="entry name" value="Pancreatic trypsin inhibitor Kunitz domain"/>
    <property type="match status" value="1"/>
</dbReference>
<dbReference type="InterPro" id="IPR002223">
    <property type="entry name" value="Kunitz_BPTI"/>
</dbReference>
<dbReference type="InterPro" id="IPR036880">
    <property type="entry name" value="Kunitz_BPTI_sf"/>
</dbReference>
<dbReference type="InterPro" id="IPR020901">
    <property type="entry name" value="Prtase_inh_Kunz-CS"/>
</dbReference>
<dbReference type="InterPro" id="IPR050098">
    <property type="entry name" value="TFPI/VKTCI-like"/>
</dbReference>
<dbReference type="PANTHER" id="PTHR10083">
    <property type="entry name" value="KUNITZ-TYPE PROTEASE INHIBITOR-RELATED"/>
    <property type="match status" value="1"/>
</dbReference>
<dbReference type="Pfam" id="PF00014">
    <property type="entry name" value="Kunitz_BPTI"/>
    <property type="match status" value="1"/>
</dbReference>
<dbReference type="PRINTS" id="PR00759">
    <property type="entry name" value="BASICPTASE"/>
</dbReference>
<dbReference type="SMART" id="SM00131">
    <property type="entry name" value="KU"/>
    <property type="match status" value="1"/>
</dbReference>
<dbReference type="SUPFAM" id="SSF57362">
    <property type="entry name" value="BPTI-like"/>
    <property type="match status" value="1"/>
</dbReference>
<dbReference type="PROSITE" id="PS00280">
    <property type="entry name" value="BPTI_KUNITZ_1"/>
    <property type="match status" value="1"/>
</dbReference>
<dbReference type="PROSITE" id="PS50279">
    <property type="entry name" value="BPTI_KUNITZ_2"/>
    <property type="match status" value="1"/>
</dbReference>
<protein>
    <recommendedName>
        <fullName>Male accessory gland serine protease inhibitor</fullName>
    </recommendedName>
    <alternativeName>
        <fullName>Acrosin inhibitor</fullName>
    </alternativeName>
    <alternativeName>
        <fullName>Paragonial peptide D</fullName>
    </alternativeName>
</protein>